<comment type="similarity">
    <text evidence="1">Belongs to the UPF0354 family.</text>
</comment>
<proteinExistence type="inferred from homology"/>
<organism>
    <name type="scientific">Staphylococcus haemolyticus (strain JCSC1435)</name>
    <dbReference type="NCBI Taxonomy" id="279808"/>
    <lineage>
        <taxon>Bacteria</taxon>
        <taxon>Bacillati</taxon>
        <taxon>Bacillota</taxon>
        <taxon>Bacilli</taxon>
        <taxon>Bacillales</taxon>
        <taxon>Staphylococcaceae</taxon>
        <taxon>Staphylococcus</taxon>
    </lineage>
</organism>
<dbReference type="EMBL" id="AP006716">
    <property type="protein sequence ID" value="BAE04488.1"/>
    <property type="molecule type" value="Genomic_DNA"/>
</dbReference>
<dbReference type="RefSeq" id="WP_011275480.1">
    <property type="nucleotide sequence ID" value="NC_007168.1"/>
</dbReference>
<dbReference type="KEGG" id="sha:SH1179"/>
<dbReference type="eggNOG" id="COG4848">
    <property type="taxonomic scope" value="Bacteria"/>
</dbReference>
<dbReference type="HOGENOM" id="CLU_085634_0_0_9"/>
<dbReference type="OrthoDB" id="154553at2"/>
<dbReference type="Proteomes" id="UP000000543">
    <property type="component" value="Chromosome"/>
</dbReference>
<dbReference type="HAMAP" id="MF_01548">
    <property type="entry name" value="UPF0354"/>
    <property type="match status" value="1"/>
</dbReference>
<dbReference type="InterPro" id="IPR010838">
    <property type="entry name" value="DUF1444"/>
</dbReference>
<dbReference type="NCBIfam" id="NF010189">
    <property type="entry name" value="PRK13668.1"/>
    <property type="match status" value="1"/>
</dbReference>
<dbReference type="Pfam" id="PF07285">
    <property type="entry name" value="DUF1444"/>
    <property type="match status" value="1"/>
</dbReference>
<dbReference type="PIRSF" id="PIRSF012562">
    <property type="entry name" value="UCP012562"/>
    <property type="match status" value="1"/>
</dbReference>
<reference key="1">
    <citation type="journal article" date="2005" name="J. Bacteriol.">
        <title>Whole-genome sequencing of Staphylococcus haemolyticus uncovers the extreme plasticity of its genome and the evolution of human-colonizing staphylococcal species.</title>
        <authorList>
            <person name="Takeuchi F."/>
            <person name="Watanabe S."/>
            <person name="Baba T."/>
            <person name="Yuzawa H."/>
            <person name="Ito T."/>
            <person name="Morimoto Y."/>
            <person name="Kuroda M."/>
            <person name="Cui L."/>
            <person name="Takahashi M."/>
            <person name="Ankai A."/>
            <person name="Baba S."/>
            <person name="Fukui S."/>
            <person name="Lee J.C."/>
            <person name="Hiramatsu K."/>
        </authorList>
    </citation>
    <scope>NUCLEOTIDE SEQUENCE [LARGE SCALE GENOMIC DNA]</scope>
    <source>
        <strain>JCSC1435</strain>
    </source>
</reference>
<accession>Q4L787</accession>
<name>Y1179_STAHJ</name>
<feature type="chain" id="PRO_0000171115" description="UPF0354 protein SH1179">
    <location>
        <begin position="1"/>
        <end position="285"/>
    </location>
</feature>
<gene>
    <name type="ordered locus">SH1179</name>
</gene>
<sequence>MNVFQIRDKLKQRLAHLNVDFKFDREEETLRIYRQDNYKGVTIKLNAIVAKYEVQKEKIIDEIVYYVEEAIAQMDDESIEKMTNIQIMPVIRATSFDKKTKEGHRFIIEKHTAETNIYYALDLGKSYRLIDESMLESLGLTEQQVKEMSLFNIRKLKNEYKTDEVKGNIFYFVNSNDGYDASRILNTKFLDDIYQQCEGEMLVAVPHQDVLVIADIRNKTGYDVMAHLTMEFFTKGLVPITSLSFGYEKGHFEPIFILGKNNKQKRDSNVIQRLEANRKRFNNKK</sequence>
<evidence type="ECO:0000255" key="1">
    <source>
        <dbReference type="HAMAP-Rule" id="MF_01548"/>
    </source>
</evidence>
<protein>
    <recommendedName>
        <fullName evidence="1">UPF0354 protein SH1179</fullName>
    </recommendedName>
</protein>